<name>GLPE_ERWT9</name>
<accession>B2VJU2</accession>
<gene>
    <name evidence="1" type="primary">glpE</name>
    <name type="ordered locus">ETA_32410</name>
</gene>
<evidence type="ECO:0000255" key="1">
    <source>
        <dbReference type="HAMAP-Rule" id="MF_01009"/>
    </source>
</evidence>
<reference key="1">
    <citation type="journal article" date="2008" name="Environ. Microbiol.">
        <title>The genome of Erwinia tasmaniensis strain Et1/99, a non-pathogenic bacterium in the genus Erwinia.</title>
        <authorList>
            <person name="Kube M."/>
            <person name="Migdoll A.M."/>
            <person name="Mueller I."/>
            <person name="Kuhl H."/>
            <person name="Beck A."/>
            <person name="Reinhardt R."/>
            <person name="Geider K."/>
        </authorList>
    </citation>
    <scope>NUCLEOTIDE SEQUENCE [LARGE SCALE GENOMIC DNA]</scope>
    <source>
        <strain>DSM 17950 / CFBP 7177 / CIP 109463 / NCPPB 4357 / Et1/99</strain>
    </source>
</reference>
<organism>
    <name type="scientific">Erwinia tasmaniensis (strain DSM 17950 / CFBP 7177 / CIP 109463 / NCPPB 4357 / Et1/99)</name>
    <dbReference type="NCBI Taxonomy" id="465817"/>
    <lineage>
        <taxon>Bacteria</taxon>
        <taxon>Pseudomonadati</taxon>
        <taxon>Pseudomonadota</taxon>
        <taxon>Gammaproteobacteria</taxon>
        <taxon>Enterobacterales</taxon>
        <taxon>Erwiniaceae</taxon>
        <taxon>Erwinia</taxon>
    </lineage>
</organism>
<keyword id="KW-0963">Cytoplasm</keyword>
<keyword id="KW-1185">Reference proteome</keyword>
<keyword id="KW-0808">Transferase</keyword>
<sequence>MEQFECINIQQAQQKLADDNALLVDIRDAQSFAAAHASGAFHLSNESLPPFLAQSDLARPVLVMCYHGNSSKGAAQYLLGQGFSAAYSIDGGFEAWRIAFPQQVSAQ</sequence>
<feature type="chain" id="PRO_1000190096" description="Thiosulfate sulfurtransferase GlpE">
    <location>
        <begin position="1"/>
        <end position="107"/>
    </location>
</feature>
<feature type="domain" description="Rhodanese" evidence="1">
    <location>
        <begin position="17"/>
        <end position="105"/>
    </location>
</feature>
<feature type="active site" description="Cysteine persulfide intermediate" evidence="1">
    <location>
        <position position="65"/>
    </location>
</feature>
<protein>
    <recommendedName>
        <fullName evidence="1">Thiosulfate sulfurtransferase GlpE</fullName>
        <ecNumber evidence="1">2.8.1.1</ecNumber>
    </recommendedName>
</protein>
<dbReference type="EC" id="2.8.1.1" evidence="1"/>
<dbReference type="EMBL" id="CU468135">
    <property type="protein sequence ID" value="CAO98287.1"/>
    <property type="molecule type" value="Genomic_DNA"/>
</dbReference>
<dbReference type="RefSeq" id="WP_012442914.1">
    <property type="nucleotide sequence ID" value="NC_010694.1"/>
</dbReference>
<dbReference type="SMR" id="B2VJU2"/>
<dbReference type="STRING" id="465817.ETA_32410"/>
<dbReference type="KEGG" id="eta:ETA_32410"/>
<dbReference type="eggNOG" id="COG0607">
    <property type="taxonomic scope" value="Bacteria"/>
</dbReference>
<dbReference type="HOGENOM" id="CLU_089574_14_0_6"/>
<dbReference type="OrthoDB" id="9811849at2"/>
<dbReference type="Proteomes" id="UP000001726">
    <property type="component" value="Chromosome"/>
</dbReference>
<dbReference type="GO" id="GO:0005737">
    <property type="term" value="C:cytoplasm"/>
    <property type="evidence" value="ECO:0007669"/>
    <property type="project" value="UniProtKB-SubCell"/>
</dbReference>
<dbReference type="GO" id="GO:0004792">
    <property type="term" value="F:thiosulfate-cyanide sulfurtransferase activity"/>
    <property type="evidence" value="ECO:0007669"/>
    <property type="project" value="UniProtKB-UniRule"/>
</dbReference>
<dbReference type="GO" id="GO:0006071">
    <property type="term" value="P:glycerol metabolic process"/>
    <property type="evidence" value="ECO:0007669"/>
    <property type="project" value="UniProtKB-UniRule"/>
</dbReference>
<dbReference type="CDD" id="cd01444">
    <property type="entry name" value="GlpE_ST"/>
    <property type="match status" value="1"/>
</dbReference>
<dbReference type="Gene3D" id="3.40.250.10">
    <property type="entry name" value="Rhodanese-like domain"/>
    <property type="match status" value="1"/>
</dbReference>
<dbReference type="HAMAP" id="MF_01009">
    <property type="entry name" value="Thiosulf_sulfurtr"/>
    <property type="match status" value="1"/>
</dbReference>
<dbReference type="InterPro" id="IPR050229">
    <property type="entry name" value="GlpE_sulfurtransferase"/>
</dbReference>
<dbReference type="InterPro" id="IPR001763">
    <property type="entry name" value="Rhodanese-like_dom"/>
</dbReference>
<dbReference type="InterPro" id="IPR036873">
    <property type="entry name" value="Rhodanese-like_dom_sf"/>
</dbReference>
<dbReference type="InterPro" id="IPR023695">
    <property type="entry name" value="Thiosulf_sulfurTrfase"/>
</dbReference>
<dbReference type="NCBIfam" id="NF001195">
    <property type="entry name" value="PRK00162.1"/>
    <property type="match status" value="1"/>
</dbReference>
<dbReference type="PANTHER" id="PTHR43031">
    <property type="entry name" value="FAD-DEPENDENT OXIDOREDUCTASE"/>
    <property type="match status" value="1"/>
</dbReference>
<dbReference type="PANTHER" id="PTHR43031:SF6">
    <property type="entry name" value="THIOSULFATE SULFURTRANSFERASE GLPE"/>
    <property type="match status" value="1"/>
</dbReference>
<dbReference type="Pfam" id="PF00581">
    <property type="entry name" value="Rhodanese"/>
    <property type="match status" value="1"/>
</dbReference>
<dbReference type="SMART" id="SM00450">
    <property type="entry name" value="RHOD"/>
    <property type="match status" value="1"/>
</dbReference>
<dbReference type="SUPFAM" id="SSF52821">
    <property type="entry name" value="Rhodanese/Cell cycle control phosphatase"/>
    <property type="match status" value="1"/>
</dbReference>
<dbReference type="PROSITE" id="PS50206">
    <property type="entry name" value="RHODANESE_3"/>
    <property type="match status" value="1"/>
</dbReference>
<comment type="function">
    <text evidence="1">Transferase that catalyzes the transfer of sulfur from thiosulfate to thiophilic acceptors such as cyanide or dithiols. May function in a CysM-independent thiosulfate assimilation pathway by catalyzing the conversion of thiosulfate to sulfite, which can then be used for L-cysteine biosynthesis.</text>
</comment>
<comment type="catalytic activity">
    <reaction evidence="1">
        <text>thiosulfate + hydrogen cyanide = thiocyanate + sulfite + 2 H(+)</text>
        <dbReference type="Rhea" id="RHEA:16881"/>
        <dbReference type="ChEBI" id="CHEBI:15378"/>
        <dbReference type="ChEBI" id="CHEBI:17359"/>
        <dbReference type="ChEBI" id="CHEBI:18022"/>
        <dbReference type="ChEBI" id="CHEBI:18407"/>
        <dbReference type="ChEBI" id="CHEBI:33542"/>
        <dbReference type="EC" id="2.8.1.1"/>
    </reaction>
</comment>
<comment type="catalytic activity">
    <reaction evidence="1">
        <text>thiosulfate + [thioredoxin]-dithiol = [thioredoxin]-disulfide + hydrogen sulfide + sulfite + 2 H(+)</text>
        <dbReference type="Rhea" id="RHEA:83859"/>
        <dbReference type="Rhea" id="RHEA-COMP:10698"/>
        <dbReference type="Rhea" id="RHEA-COMP:10700"/>
        <dbReference type="ChEBI" id="CHEBI:15378"/>
        <dbReference type="ChEBI" id="CHEBI:17359"/>
        <dbReference type="ChEBI" id="CHEBI:29919"/>
        <dbReference type="ChEBI" id="CHEBI:29950"/>
        <dbReference type="ChEBI" id="CHEBI:33542"/>
        <dbReference type="ChEBI" id="CHEBI:50058"/>
    </reaction>
</comment>
<comment type="subcellular location">
    <subcellularLocation>
        <location evidence="1">Cytoplasm</location>
    </subcellularLocation>
</comment>
<comment type="similarity">
    <text evidence="1">Belongs to the GlpE family.</text>
</comment>
<proteinExistence type="inferred from homology"/>